<accession>Q8U001</accession>
<organism>
    <name type="scientific">Pyrococcus furiosus (strain ATCC 43587 / DSM 3638 / JCM 8422 / Vc1)</name>
    <dbReference type="NCBI Taxonomy" id="186497"/>
    <lineage>
        <taxon>Archaea</taxon>
        <taxon>Methanobacteriati</taxon>
        <taxon>Methanobacteriota</taxon>
        <taxon>Thermococci</taxon>
        <taxon>Thermococcales</taxon>
        <taxon>Thermococcaceae</taxon>
        <taxon>Pyrococcus</taxon>
    </lineage>
</organism>
<proteinExistence type="evidence at protein level"/>
<reference key="1">
    <citation type="journal article" date="1999" name="Genetics">
        <title>Divergence of the hyperthermophilic archaea Pyrococcus furiosus and P. horikoshii inferred from complete genomic sequences.</title>
        <authorList>
            <person name="Maeder D.L."/>
            <person name="Weiss R.B."/>
            <person name="Dunn D.M."/>
            <person name="Cherry J.L."/>
            <person name="Gonzalez J.M."/>
            <person name="DiRuggiero J."/>
            <person name="Robb F.T."/>
        </authorList>
    </citation>
    <scope>NUCLEOTIDE SEQUENCE [LARGE SCALE GENOMIC DNA]</scope>
    <source>
        <strain>ATCC 43587 / DSM 3638 / JCM 8422 / Vc1</strain>
    </source>
</reference>
<reference evidence="4" key="2">
    <citation type="journal article" date="2013" name="Nucleic Acids Res.">
        <title>Promiscuous behaviour of archaeal ribosomal proteins: implications for eukaryotic ribosome evolution.</title>
        <authorList>
            <person name="Armache J.P."/>
            <person name="Anger A.M."/>
            <person name="Marquez V."/>
            <person name="Franckenberg S."/>
            <person name="Frohlich T."/>
            <person name="Villa E."/>
            <person name="Berninghausen O."/>
            <person name="Thomm M."/>
            <person name="Arnold G.J."/>
            <person name="Beckmann R."/>
            <person name="Wilson D.N."/>
        </authorList>
    </citation>
    <scope>STRUCTURE BY ELECTRON MICROSCOPY (6.60 ANGSTROMS) IN THE 70S RIBOSOME</scope>
    <scope>SUBUNIT</scope>
</reference>
<keyword id="KW-0002">3D-structure</keyword>
<keyword id="KW-1185">Reference proteome</keyword>
<keyword id="KW-0687">Ribonucleoprotein</keyword>
<keyword id="KW-0689">Ribosomal protein</keyword>
<keyword id="KW-0694">RNA-binding</keyword>
<keyword id="KW-0699">rRNA-binding</keyword>
<evidence type="ECO:0000255" key="1">
    <source>
        <dbReference type="HAMAP-Rule" id="MF_01320"/>
    </source>
</evidence>
<evidence type="ECO:0000256" key="2">
    <source>
        <dbReference type="SAM" id="MobiDB-lite"/>
    </source>
</evidence>
<evidence type="ECO:0000269" key="3">
    <source>
    </source>
</evidence>
<evidence type="ECO:0007744" key="4">
    <source>
        <dbReference type="PDB" id="4V6U"/>
    </source>
</evidence>
<comment type="function">
    <text evidence="1">One of the primary rRNA binding proteins. Required for association of the 30S and 50S subunits to form the 70S ribosome, for tRNA binding and peptide bond formation. It has been suggested to have peptidyltransferase activity; this is somewhat controversial. Makes several contacts with the 16S rRNA in the 70S ribosome.</text>
</comment>
<comment type="subunit">
    <text evidence="1 3">Part of the 50S ribosomal subunit (PubMed:23222135). Forms a bridge to the 30S subunit in the 70S ribosome.</text>
</comment>
<comment type="similarity">
    <text evidence="1">Belongs to the universal ribosomal protein uL2 family.</text>
</comment>
<feature type="chain" id="PRO_0000129723" description="Large ribosomal subunit protein uL2">
    <location>
        <begin position="1"/>
        <end position="239"/>
    </location>
</feature>
<feature type="region of interest" description="Disordered" evidence="2">
    <location>
        <begin position="1"/>
        <end position="21"/>
    </location>
</feature>
<feature type="region of interest" description="Disordered" evidence="2">
    <location>
        <begin position="203"/>
        <end position="239"/>
    </location>
</feature>
<feature type="compositionally biased region" description="Basic residues" evidence="2">
    <location>
        <begin position="222"/>
        <end position="239"/>
    </location>
</feature>
<gene>
    <name evidence="1" type="primary">rpl2</name>
    <name type="ordered locus">PF1822</name>
</gene>
<sequence length="239" mass="26037">MGKSLIQQRRGKGSPTFKSPSHRFRGAVKYIPLNYTQEKTLRGVVEEIMHDPGRTAPVARVKFENGIEKLIIAPEGLLVGQEIYIGPDAPIAVGNTLPLAKIPEGTYVYNIEGIPGDGGKYVRAGGTYALVVSREPDKVIVQLPSGELKAFNPMCRATIGVVAGGGRLEKPLVKAGKAYYKYKARNKFWPTPRGVKMNAVNHPFGGKEHHPGKPTTTSRRAPPGRKVGHIAARRTGRRK</sequence>
<name>RL2_PYRFU</name>
<protein>
    <recommendedName>
        <fullName evidence="1">Large ribosomal subunit protein uL2</fullName>
    </recommendedName>
    <alternativeName>
        <fullName>50S ribosomal protein L2</fullName>
    </alternativeName>
</protein>
<dbReference type="EMBL" id="AE009950">
    <property type="protein sequence ID" value="AAL81946.1"/>
    <property type="molecule type" value="Genomic_DNA"/>
</dbReference>
<dbReference type="RefSeq" id="WP_011012963.1">
    <property type="nucleotide sequence ID" value="NZ_CP023154.1"/>
</dbReference>
<dbReference type="PDB" id="4V4N">
    <property type="method" value="EM"/>
    <property type="resolution" value="9.00 A"/>
    <property type="chains" value="B=1-239"/>
</dbReference>
<dbReference type="PDB" id="4V6U">
    <property type="method" value="EM"/>
    <property type="resolution" value="6.60 A"/>
    <property type="chains" value="BB=1-239"/>
</dbReference>
<dbReference type="PDBsum" id="4V4N"/>
<dbReference type="PDBsum" id="4V6U"/>
<dbReference type="SMR" id="Q8U001"/>
<dbReference type="STRING" id="186497.PF1822"/>
<dbReference type="PaxDb" id="186497-PF1822"/>
<dbReference type="KEGG" id="pfu:PF1822"/>
<dbReference type="PATRIC" id="fig|186497.12.peg.1893"/>
<dbReference type="eggNOG" id="arCOG04067">
    <property type="taxonomic scope" value="Archaea"/>
</dbReference>
<dbReference type="HOGENOM" id="CLU_036235_0_1_2"/>
<dbReference type="OrthoDB" id="5987at2157"/>
<dbReference type="PhylomeDB" id="Q8U001"/>
<dbReference type="Proteomes" id="UP000001013">
    <property type="component" value="Chromosome"/>
</dbReference>
<dbReference type="GO" id="GO:0022625">
    <property type="term" value="C:cytosolic large ribosomal subunit"/>
    <property type="evidence" value="ECO:0007669"/>
    <property type="project" value="TreeGrafter"/>
</dbReference>
<dbReference type="GO" id="GO:0019843">
    <property type="term" value="F:rRNA binding"/>
    <property type="evidence" value="ECO:0007669"/>
    <property type="project" value="UniProtKB-UniRule"/>
</dbReference>
<dbReference type="GO" id="GO:0003735">
    <property type="term" value="F:structural constituent of ribosome"/>
    <property type="evidence" value="ECO:0007669"/>
    <property type="project" value="InterPro"/>
</dbReference>
<dbReference type="GO" id="GO:0002181">
    <property type="term" value="P:cytoplasmic translation"/>
    <property type="evidence" value="ECO:0007669"/>
    <property type="project" value="TreeGrafter"/>
</dbReference>
<dbReference type="FunFam" id="2.30.30.30:FF:000001">
    <property type="entry name" value="50S ribosomal protein L2"/>
    <property type="match status" value="1"/>
</dbReference>
<dbReference type="FunFam" id="2.40.50.140:FF:000020">
    <property type="entry name" value="60S ribosomal protein L2"/>
    <property type="match status" value="1"/>
</dbReference>
<dbReference type="FunFam" id="4.10.950.10:FF:000002">
    <property type="entry name" value="60S ribosomal protein L2"/>
    <property type="match status" value="1"/>
</dbReference>
<dbReference type="Gene3D" id="2.30.30.30">
    <property type="match status" value="1"/>
</dbReference>
<dbReference type="Gene3D" id="2.40.50.140">
    <property type="entry name" value="Nucleic acid-binding proteins"/>
    <property type="match status" value="1"/>
</dbReference>
<dbReference type="Gene3D" id="4.10.950.10">
    <property type="entry name" value="Ribosomal protein L2, domain 3"/>
    <property type="match status" value="1"/>
</dbReference>
<dbReference type="HAMAP" id="MF_01320_A">
    <property type="entry name" value="Ribosomal_uL2_A"/>
    <property type="match status" value="1"/>
</dbReference>
<dbReference type="InterPro" id="IPR012340">
    <property type="entry name" value="NA-bd_OB-fold"/>
</dbReference>
<dbReference type="InterPro" id="IPR014722">
    <property type="entry name" value="Rib_uL2_dom2"/>
</dbReference>
<dbReference type="InterPro" id="IPR002171">
    <property type="entry name" value="Ribosomal_uL2"/>
</dbReference>
<dbReference type="InterPro" id="IPR023672">
    <property type="entry name" value="Ribosomal_uL2_arc_euk"/>
</dbReference>
<dbReference type="InterPro" id="IPR022669">
    <property type="entry name" value="Ribosomal_uL2_C"/>
</dbReference>
<dbReference type="InterPro" id="IPR014726">
    <property type="entry name" value="Ribosomal_uL2_dom3"/>
</dbReference>
<dbReference type="InterPro" id="IPR022666">
    <property type="entry name" value="Ribosomal_uL2_RNA-bd_dom"/>
</dbReference>
<dbReference type="InterPro" id="IPR008991">
    <property type="entry name" value="Translation_prot_SH3-like_sf"/>
</dbReference>
<dbReference type="NCBIfam" id="NF007180">
    <property type="entry name" value="PRK09612.1"/>
    <property type="match status" value="1"/>
</dbReference>
<dbReference type="PANTHER" id="PTHR13691:SF16">
    <property type="entry name" value="LARGE RIBOSOMAL SUBUNIT PROTEIN UL2"/>
    <property type="match status" value="1"/>
</dbReference>
<dbReference type="PANTHER" id="PTHR13691">
    <property type="entry name" value="RIBOSOMAL PROTEIN L2"/>
    <property type="match status" value="1"/>
</dbReference>
<dbReference type="Pfam" id="PF00181">
    <property type="entry name" value="Ribosomal_L2"/>
    <property type="match status" value="1"/>
</dbReference>
<dbReference type="Pfam" id="PF03947">
    <property type="entry name" value="Ribosomal_L2_C"/>
    <property type="match status" value="1"/>
</dbReference>
<dbReference type="PIRSF" id="PIRSF002158">
    <property type="entry name" value="Ribosomal_L2"/>
    <property type="match status" value="1"/>
</dbReference>
<dbReference type="SMART" id="SM01383">
    <property type="entry name" value="Ribosomal_L2"/>
    <property type="match status" value="1"/>
</dbReference>
<dbReference type="SMART" id="SM01382">
    <property type="entry name" value="Ribosomal_L2_C"/>
    <property type="match status" value="1"/>
</dbReference>
<dbReference type="SUPFAM" id="SSF50249">
    <property type="entry name" value="Nucleic acid-binding proteins"/>
    <property type="match status" value="1"/>
</dbReference>
<dbReference type="SUPFAM" id="SSF50104">
    <property type="entry name" value="Translation proteins SH3-like domain"/>
    <property type="match status" value="1"/>
</dbReference>